<feature type="signal peptide" evidence="1">
    <location>
        <begin position="1"/>
        <end position="21"/>
    </location>
</feature>
<feature type="propeptide" id="PRO_0000447079" evidence="5">
    <location>
        <begin position="22"/>
        <end position="38"/>
    </location>
</feature>
<feature type="peptide" id="PRO_0000447080" description="U-myrmeciitoxin(01)-Mg5b" evidence="2">
    <location>
        <begin position="39"/>
        <end position="59"/>
    </location>
</feature>
<protein>
    <recommendedName>
        <fullName evidence="4">U-myrmeciitoxin(01)-Mg5b</fullName>
        <shortName evidence="3">MIITX(01)-Mg5b</shortName>
        <shortName evidence="4">U-MIITX(01)-Mg5b</shortName>
    </recommendedName>
</protein>
<sequence length="59" mass="6515">MRLSYLSLALAIIFVLTIMHASNVEAKASADPEPDAVGSINVKNLMNMIREQITSRLKK</sequence>
<reference key="1">
    <citation type="journal article" date="2018" name="Sci. Adv.">
        <title>A comprehensive portrait of the venom of the giant red bull ant, Myrmecia gulosa, reveals a hyperdiverse hymenopteran toxin gene family.</title>
        <authorList>
            <person name="Robinson S.D."/>
            <person name="Mueller A."/>
            <person name="Clayton D."/>
            <person name="Starobova H."/>
            <person name="Hamilton B.R."/>
            <person name="Payne R.J."/>
            <person name="Vetter I."/>
            <person name="King G.F."/>
            <person name="Undheim E.A.B."/>
        </authorList>
    </citation>
    <scope>NUCLEOTIDE SEQUENCE [MRNA]</scope>
    <scope>MASS SPECTROMETRY</scope>
    <scope>SUBCELLULAR LOCATION</scope>
    <source>
        <tissue>Venom</tissue>
        <tissue>Venom gland</tissue>
    </source>
</reference>
<organism>
    <name type="scientific">Myrmecia gulosa</name>
    <name type="common">Red bulldog ant</name>
    <dbReference type="NCBI Taxonomy" id="36170"/>
    <lineage>
        <taxon>Eukaryota</taxon>
        <taxon>Metazoa</taxon>
        <taxon>Ecdysozoa</taxon>
        <taxon>Arthropoda</taxon>
        <taxon>Hexapoda</taxon>
        <taxon>Insecta</taxon>
        <taxon>Pterygota</taxon>
        <taxon>Neoptera</taxon>
        <taxon>Endopterygota</taxon>
        <taxon>Hymenoptera</taxon>
        <taxon>Apocrita</taxon>
        <taxon>Aculeata</taxon>
        <taxon>Formicoidea</taxon>
        <taxon>Formicidae</taxon>
        <taxon>Myrmeciinae</taxon>
        <taxon>Myrmeciini</taxon>
        <taxon>Myrmecia</taxon>
    </lineage>
</organism>
<dbReference type="SMR" id="P0DSJ9"/>
<dbReference type="GO" id="GO:0005576">
    <property type="term" value="C:extracellular region"/>
    <property type="evidence" value="ECO:0007669"/>
    <property type="project" value="UniProtKB-SubCell"/>
</dbReference>
<dbReference type="InterPro" id="IPR049518">
    <property type="entry name" value="Pilosulin"/>
</dbReference>
<dbReference type="Pfam" id="PF17499">
    <property type="entry name" value="Pilosulin"/>
    <property type="match status" value="1"/>
</dbReference>
<comment type="function">
    <text evidence="4">May have antimicrobial properties, like most ant linear peptides.</text>
</comment>
<comment type="subcellular location">
    <subcellularLocation>
        <location evidence="2">Secreted</location>
    </subcellularLocation>
</comment>
<comment type="tissue specificity">
    <text evidence="5">Expressed by the venom gland.</text>
</comment>
<comment type="mass spectrometry" mass="2515.42" method="MALDI" evidence="2"/>
<comment type="similarity">
    <text evidence="4">Belongs to the formicidae venom precursor-01 superfamily.</text>
</comment>
<comment type="online information" name="National Center for Biotechnology Information (NCBI)">
    <link uri="https://www.ncbi.nlm.nih.gov/nuccore/GGFG01000007"/>
</comment>
<keyword id="KW-0929">Antimicrobial</keyword>
<keyword id="KW-0964">Secreted</keyword>
<keyword id="KW-0732">Signal</keyword>
<name>TX15B_MYRGU</name>
<accession>P0DSJ9</accession>
<proteinExistence type="evidence at protein level"/>
<evidence type="ECO:0000255" key="1"/>
<evidence type="ECO:0000269" key="2">
    <source>
    </source>
</evidence>
<evidence type="ECO:0000303" key="3">
    <source>
    </source>
</evidence>
<evidence type="ECO:0000305" key="4"/>
<evidence type="ECO:0000305" key="5">
    <source>
    </source>
</evidence>